<comment type="function">
    <text evidence="1">Component of the biogenesis of lysosome-related organelles complex-1 (BLOC-1), a complex involved in endosomal cargo sorting.</text>
</comment>
<comment type="subunit">
    <text evidence="1">Component of the biogenesis of lysosome-related organelles complex-1 (BLOC-1).</text>
</comment>
<comment type="subcellular location">
    <subcellularLocation>
        <location evidence="1">Endosome</location>
    </subcellularLocation>
</comment>
<comment type="similarity">
    <text evidence="3">Belongs to the SNAPIN family.</text>
</comment>
<accession>Q6FP96</accession>
<feature type="chain" id="PRO_0000410657" description="Biogenesis of lysosome-related organelles complex 1 subunit SNN1">
    <location>
        <begin position="1"/>
        <end position="101"/>
    </location>
</feature>
<feature type="coiled-coil region" evidence="2">
    <location>
        <begin position="62"/>
        <end position="100"/>
    </location>
</feature>
<name>SNAPN_CANGA</name>
<evidence type="ECO:0000250" key="1"/>
<evidence type="ECO:0000255" key="2"/>
<evidence type="ECO:0000305" key="3"/>
<organism>
    <name type="scientific">Candida glabrata (strain ATCC 2001 / BCRC 20586 / JCM 3761 / NBRC 0622 / NRRL Y-65 / CBS 138)</name>
    <name type="common">Yeast</name>
    <name type="synonym">Nakaseomyces glabratus</name>
    <dbReference type="NCBI Taxonomy" id="284593"/>
    <lineage>
        <taxon>Eukaryota</taxon>
        <taxon>Fungi</taxon>
        <taxon>Dikarya</taxon>
        <taxon>Ascomycota</taxon>
        <taxon>Saccharomycotina</taxon>
        <taxon>Saccharomycetes</taxon>
        <taxon>Saccharomycetales</taxon>
        <taxon>Saccharomycetaceae</taxon>
        <taxon>Nakaseomyces</taxon>
    </lineage>
</organism>
<proteinExistence type="inferred from homology"/>
<gene>
    <name type="primary">SNN1</name>
    <name type="ordered locus">CAGL0J05588g</name>
</gene>
<sequence>MSDNSEVQGIHPVELSVYSLVSSDLDNLYQAINELRESQALLILKLRTVRDSLRLENELLFDSNEYKAQFKEVNNLQKRLQKITLRLKDLERRSSQLTTSS</sequence>
<dbReference type="EMBL" id="CR380956">
    <property type="protein sequence ID" value="CAG60899.1"/>
    <property type="molecule type" value="Genomic_DNA"/>
</dbReference>
<dbReference type="RefSeq" id="XP_447948.1">
    <property type="nucleotide sequence ID" value="XM_447948.1"/>
</dbReference>
<dbReference type="SMR" id="Q6FP96"/>
<dbReference type="FunCoup" id="Q6FP96">
    <property type="interactions" value="37"/>
</dbReference>
<dbReference type="STRING" id="284593.Q6FP96"/>
<dbReference type="EnsemblFungi" id="CAGL0J05588g-T">
    <property type="protein sequence ID" value="CAGL0J05588g-T-p1"/>
    <property type="gene ID" value="CAGL0J05588g"/>
</dbReference>
<dbReference type="KEGG" id="cgr:2889798"/>
<dbReference type="CGD" id="CAL0132942">
    <property type="gene designation" value="CAGL0J05588g"/>
</dbReference>
<dbReference type="VEuPathDB" id="FungiDB:B1J91_J05588g"/>
<dbReference type="VEuPathDB" id="FungiDB:CAGL0J05588g"/>
<dbReference type="eggNOG" id="ENOG502S7PY">
    <property type="taxonomic scope" value="Eukaryota"/>
</dbReference>
<dbReference type="HOGENOM" id="CLU_178727_0_0_1"/>
<dbReference type="InParanoid" id="Q6FP96"/>
<dbReference type="OMA" id="IHPIELC"/>
<dbReference type="Proteomes" id="UP000002428">
    <property type="component" value="Chromosome J"/>
</dbReference>
<dbReference type="GO" id="GO:0031083">
    <property type="term" value="C:BLOC-1 complex"/>
    <property type="evidence" value="ECO:0007669"/>
    <property type="project" value="EnsemblFungi"/>
</dbReference>
<dbReference type="GO" id="GO:0005768">
    <property type="term" value="C:endosome"/>
    <property type="evidence" value="ECO:0007669"/>
    <property type="project" value="UniProtKB-SubCell"/>
</dbReference>
<dbReference type="GO" id="GO:0007032">
    <property type="term" value="P:endosome organization"/>
    <property type="evidence" value="ECO:0007669"/>
    <property type="project" value="EnsemblFungi"/>
</dbReference>
<dbReference type="GO" id="GO:0032880">
    <property type="term" value="P:regulation of protein localization"/>
    <property type="evidence" value="ECO:0007669"/>
    <property type="project" value="EnsemblFungi"/>
</dbReference>
<keyword id="KW-0175">Coiled coil</keyword>
<keyword id="KW-0967">Endosome</keyword>
<keyword id="KW-1185">Reference proteome</keyword>
<keyword id="KW-0813">Transport</keyword>
<reference key="1">
    <citation type="journal article" date="2004" name="Nature">
        <title>Genome evolution in yeasts.</title>
        <authorList>
            <person name="Dujon B."/>
            <person name="Sherman D."/>
            <person name="Fischer G."/>
            <person name="Durrens P."/>
            <person name="Casaregola S."/>
            <person name="Lafontaine I."/>
            <person name="de Montigny J."/>
            <person name="Marck C."/>
            <person name="Neuveglise C."/>
            <person name="Talla E."/>
            <person name="Goffard N."/>
            <person name="Frangeul L."/>
            <person name="Aigle M."/>
            <person name="Anthouard V."/>
            <person name="Babour A."/>
            <person name="Barbe V."/>
            <person name="Barnay S."/>
            <person name="Blanchin S."/>
            <person name="Beckerich J.-M."/>
            <person name="Beyne E."/>
            <person name="Bleykasten C."/>
            <person name="Boisrame A."/>
            <person name="Boyer J."/>
            <person name="Cattolico L."/>
            <person name="Confanioleri F."/>
            <person name="de Daruvar A."/>
            <person name="Despons L."/>
            <person name="Fabre E."/>
            <person name="Fairhead C."/>
            <person name="Ferry-Dumazet H."/>
            <person name="Groppi A."/>
            <person name="Hantraye F."/>
            <person name="Hennequin C."/>
            <person name="Jauniaux N."/>
            <person name="Joyet P."/>
            <person name="Kachouri R."/>
            <person name="Kerrest A."/>
            <person name="Koszul R."/>
            <person name="Lemaire M."/>
            <person name="Lesur I."/>
            <person name="Ma L."/>
            <person name="Muller H."/>
            <person name="Nicaud J.-M."/>
            <person name="Nikolski M."/>
            <person name="Oztas S."/>
            <person name="Ozier-Kalogeropoulos O."/>
            <person name="Pellenz S."/>
            <person name="Potier S."/>
            <person name="Richard G.-F."/>
            <person name="Straub M.-L."/>
            <person name="Suleau A."/>
            <person name="Swennen D."/>
            <person name="Tekaia F."/>
            <person name="Wesolowski-Louvel M."/>
            <person name="Westhof E."/>
            <person name="Wirth B."/>
            <person name="Zeniou-Meyer M."/>
            <person name="Zivanovic Y."/>
            <person name="Bolotin-Fukuhara M."/>
            <person name="Thierry A."/>
            <person name="Bouchier C."/>
            <person name="Caudron B."/>
            <person name="Scarpelli C."/>
            <person name="Gaillardin C."/>
            <person name="Weissenbach J."/>
            <person name="Wincker P."/>
            <person name="Souciet J.-L."/>
        </authorList>
    </citation>
    <scope>NUCLEOTIDE SEQUENCE [LARGE SCALE GENOMIC DNA]</scope>
    <source>
        <strain>ATCC 2001 / BCRC 20586 / JCM 3761 / NBRC 0622 / NRRL Y-65 / CBS 138</strain>
    </source>
</reference>
<protein>
    <recommendedName>
        <fullName>Biogenesis of lysosome-related organelles complex 1 subunit SNN1</fullName>
        <shortName>BLOC-1 subunit SNN1</shortName>
    </recommendedName>
    <alternativeName>
        <fullName>SNAPIN-like protein 1</fullName>
    </alternativeName>
</protein>